<reference key="1">
    <citation type="journal article" date="2003" name="Proc. Natl. Acad. Sci. U.S.A.">
        <title>Reductive genome evolution in Buchnera aphidicola.</title>
        <authorList>
            <person name="van Ham R.C.H.J."/>
            <person name="Kamerbeek J."/>
            <person name="Palacios C."/>
            <person name="Rausell C."/>
            <person name="Abascal F."/>
            <person name="Bastolla U."/>
            <person name="Fernandez J.M."/>
            <person name="Jimenez L."/>
            <person name="Postigo M."/>
            <person name="Silva F.J."/>
            <person name="Tamames J."/>
            <person name="Viguera E."/>
            <person name="Latorre A."/>
            <person name="Valencia A."/>
            <person name="Moran F."/>
            <person name="Moya A."/>
        </authorList>
    </citation>
    <scope>NUCLEOTIDE SEQUENCE [LARGE SCALE GENOMIC DNA]</scope>
    <source>
        <strain>Bp</strain>
    </source>
</reference>
<dbReference type="EC" id="2.7.4.9" evidence="1"/>
<dbReference type="EMBL" id="AE016826">
    <property type="protein sequence ID" value="AAO27045.1"/>
    <property type="status" value="ALT_INIT"/>
    <property type="molecule type" value="Genomic_DNA"/>
</dbReference>
<dbReference type="RefSeq" id="WP_148140860.1">
    <property type="nucleotide sequence ID" value="NC_004545.1"/>
</dbReference>
<dbReference type="SMR" id="P59500"/>
<dbReference type="STRING" id="224915.bbp_323"/>
<dbReference type="KEGG" id="bab:bbp_323"/>
<dbReference type="eggNOG" id="COG0125">
    <property type="taxonomic scope" value="Bacteria"/>
</dbReference>
<dbReference type="HOGENOM" id="CLU_049131_0_1_6"/>
<dbReference type="OrthoDB" id="9774907at2"/>
<dbReference type="Proteomes" id="UP000000601">
    <property type="component" value="Chromosome"/>
</dbReference>
<dbReference type="GO" id="GO:0005829">
    <property type="term" value="C:cytosol"/>
    <property type="evidence" value="ECO:0007669"/>
    <property type="project" value="TreeGrafter"/>
</dbReference>
<dbReference type="GO" id="GO:0005524">
    <property type="term" value="F:ATP binding"/>
    <property type="evidence" value="ECO:0007669"/>
    <property type="project" value="UniProtKB-UniRule"/>
</dbReference>
<dbReference type="GO" id="GO:0004798">
    <property type="term" value="F:dTMP kinase activity"/>
    <property type="evidence" value="ECO:0007669"/>
    <property type="project" value="UniProtKB-UniRule"/>
</dbReference>
<dbReference type="GO" id="GO:0006233">
    <property type="term" value="P:dTDP biosynthetic process"/>
    <property type="evidence" value="ECO:0007669"/>
    <property type="project" value="InterPro"/>
</dbReference>
<dbReference type="GO" id="GO:0006235">
    <property type="term" value="P:dTTP biosynthetic process"/>
    <property type="evidence" value="ECO:0007669"/>
    <property type="project" value="UniProtKB-UniRule"/>
</dbReference>
<dbReference type="GO" id="GO:0006227">
    <property type="term" value="P:dUDP biosynthetic process"/>
    <property type="evidence" value="ECO:0007669"/>
    <property type="project" value="TreeGrafter"/>
</dbReference>
<dbReference type="CDD" id="cd01672">
    <property type="entry name" value="TMPK"/>
    <property type="match status" value="1"/>
</dbReference>
<dbReference type="FunFam" id="3.40.50.300:FF:000225">
    <property type="entry name" value="Thymidylate kinase"/>
    <property type="match status" value="1"/>
</dbReference>
<dbReference type="Gene3D" id="3.40.50.300">
    <property type="entry name" value="P-loop containing nucleotide triphosphate hydrolases"/>
    <property type="match status" value="1"/>
</dbReference>
<dbReference type="HAMAP" id="MF_00165">
    <property type="entry name" value="Thymidylate_kinase"/>
    <property type="match status" value="1"/>
</dbReference>
<dbReference type="InterPro" id="IPR027417">
    <property type="entry name" value="P-loop_NTPase"/>
</dbReference>
<dbReference type="InterPro" id="IPR039430">
    <property type="entry name" value="Thymidylate_kin-like_dom"/>
</dbReference>
<dbReference type="InterPro" id="IPR018095">
    <property type="entry name" value="Thymidylate_kin_CS"/>
</dbReference>
<dbReference type="InterPro" id="IPR018094">
    <property type="entry name" value="Thymidylate_kinase"/>
</dbReference>
<dbReference type="NCBIfam" id="TIGR00041">
    <property type="entry name" value="DTMP_kinase"/>
    <property type="match status" value="1"/>
</dbReference>
<dbReference type="PANTHER" id="PTHR10344">
    <property type="entry name" value="THYMIDYLATE KINASE"/>
    <property type="match status" value="1"/>
</dbReference>
<dbReference type="PANTHER" id="PTHR10344:SF4">
    <property type="entry name" value="UMP-CMP KINASE 2, MITOCHONDRIAL"/>
    <property type="match status" value="1"/>
</dbReference>
<dbReference type="Pfam" id="PF02223">
    <property type="entry name" value="Thymidylate_kin"/>
    <property type="match status" value="1"/>
</dbReference>
<dbReference type="SUPFAM" id="SSF52540">
    <property type="entry name" value="P-loop containing nucleoside triphosphate hydrolases"/>
    <property type="match status" value="1"/>
</dbReference>
<dbReference type="PROSITE" id="PS01331">
    <property type="entry name" value="THYMIDYLATE_KINASE"/>
    <property type="match status" value="1"/>
</dbReference>
<gene>
    <name evidence="1" type="primary">tmk</name>
    <name type="ordered locus">bbp_323</name>
</gene>
<keyword id="KW-0067">ATP-binding</keyword>
<keyword id="KW-0418">Kinase</keyword>
<keyword id="KW-0545">Nucleotide biosynthesis</keyword>
<keyword id="KW-0547">Nucleotide-binding</keyword>
<keyword id="KW-1185">Reference proteome</keyword>
<keyword id="KW-0808">Transferase</keyword>
<name>KTHY_BUCBP</name>
<accession>P59500</accession>
<proteinExistence type="inferred from homology"/>
<comment type="function">
    <text evidence="1">Phosphorylation of dTMP to form dTDP in both de novo and salvage pathways of dTTP synthesis.</text>
</comment>
<comment type="catalytic activity">
    <reaction evidence="1">
        <text>dTMP + ATP = dTDP + ADP</text>
        <dbReference type="Rhea" id="RHEA:13517"/>
        <dbReference type="ChEBI" id="CHEBI:30616"/>
        <dbReference type="ChEBI" id="CHEBI:58369"/>
        <dbReference type="ChEBI" id="CHEBI:63528"/>
        <dbReference type="ChEBI" id="CHEBI:456216"/>
        <dbReference type="EC" id="2.7.4.9"/>
    </reaction>
</comment>
<comment type="similarity">
    <text evidence="1">Belongs to the thymidylate kinase family.</text>
</comment>
<comment type="sequence caution" evidence="2">
    <conflict type="erroneous initiation">
        <sequence resource="EMBL-CDS" id="AAO27045"/>
    </conflict>
</comment>
<organism>
    <name type="scientific">Buchnera aphidicola subsp. Baizongia pistaciae (strain Bp)</name>
    <dbReference type="NCBI Taxonomy" id="224915"/>
    <lineage>
        <taxon>Bacteria</taxon>
        <taxon>Pseudomonadati</taxon>
        <taxon>Pseudomonadota</taxon>
        <taxon>Gammaproteobacteria</taxon>
        <taxon>Enterobacterales</taxon>
        <taxon>Erwiniaceae</taxon>
        <taxon>Buchnera</taxon>
    </lineage>
</organism>
<feature type="chain" id="PRO_0000155251" description="Thymidylate kinase">
    <location>
        <begin position="1"/>
        <end position="212"/>
    </location>
</feature>
<feature type="binding site" evidence="1">
    <location>
        <begin position="11"/>
        <end position="18"/>
    </location>
    <ligand>
        <name>ATP</name>
        <dbReference type="ChEBI" id="CHEBI:30616"/>
    </ligand>
</feature>
<sequence length="212" mass="24547">MLKGKFIVIEGIEGSGKTTICKTLKNILYEHGIKNVICVRDPGSTPLAEKIRSLLITKDKNEYMVNETELLLFYAARIQLIKNIIQPALNKGVWVISDRYFLSSLAYQCAGRKIKEEIVLLLQSLFLKNFNPNITFYLDVTPEIGLNRIKNRNEIDRIEQNTKFFFNNVRNKYLNLIKTKPGIIKINANRKIDKVKHSCKQQMLSWLNTENL</sequence>
<evidence type="ECO:0000255" key="1">
    <source>
        <dbReference type="HAMAP-Rule" id="MF_00165"/>
    </source>
</evidence>
<evidence type="ECO:0000305" key="2"/>
<protein>
    <recommendedName>
        <fullName evidence="1">Thymidylate kinase</fullName>
        <ecNumber evidence="1">2.7.4.9</ecNumber>
    </recommendedName>
    <alternativeName>
        <fullName evidence="1">dTMP kinase</fullName>
    </alternativeName>
</protein>